<sequence length="158" mass="17721">MHEGVQVSSKLEELQALLAPVVVALGYECWGIEFSAQGRHSMLRVYIDKEGGVLVDDCAIVSRQISGVLDVEDPISVEYTLEVSSPGMERPLFTLEQFAKYVGEQVKIKLRSPFEGRRNFQGLLRGVEEQDVVVQVENHEFLLPIDMIDKANIIPSFD</sequence>
<gene>
    <name evidence="1" type="primary">rimP</name>
    <name type="ordered locus">Pfl01_0777</name>
</gene>
<protein>
    <recommendedName>
        <fullName evidence="1">Ribosome maturation factor RimP</fullName>
    </recommendedName>
</protein>
<proteinExistence type="inferred from homology"/>
<keyword id="KW-0963">Cytoplasm</keyword>
<keyword id="KW-0690">Ribosome biogenesis</keyword>
<evidence type="ECO:0000255" key="1">
    <source>
        <dbReference type="HAMAP-Rule" id="MF_01077"/>
    </source>
</evidence>
<evidence type="ECO:0000305" key="2"/>
<dbReference type="EMBL" id="CP000094">
    <property type="protein sequence ID" value="ABA72520.1"/>
    <property type="status" value="ALT_INIT"/>
    <property type="molecule type" value="Genomic_DNA"/>
</dbReference>
<dbReference type="SMR" id="Q3KI86"/>
<dbReference type="KEGG" id="pfo:Pfl01_0777"/>
<dbReference type="eggNOG" id="COG0779">
    <property type="taxonomic scope" value="Bacteria"/>
</dbReference>
<dbReference type="HOGENOM" id="CLU_070525_1_1_6"/>
<dbReference type="Proteomes" id="UP000002704">
    <property type="component" value="Chromosome"/>
</dbReference>
<dbReference type="GO" id="GO:0005829">
    <property type="term" value="C:cytosol"/>
    <property type="evidence" value="ECO:0007669"/>
    <property type="project" value="TreeGrafter"/>
</dbReference>
<dbReference type="GO" id="GO:0000028">
    <property type="term" value="P:ribosomal small subunit assembly"/>
    <property type="evidence" value="ECO:0007669"/>
    <property type="project" value="TreeGrafter"/>
</dbReference>
<dbReference type="GO" id="GO:0006412">
    <property type="term" value="P:translation"/>
    <property type="evidence" value="ECO:0007669"/>
    <property type="project" value="TreeGrafter"/>
</dbReference>
<dbReference type="CDD" id="cd01734">
    <property type="entry name" value="YlxS_C"/>
    <property type="match status" value="1"/>
</dbReference>
<dbReference type="FunFam" id="3.30.300.70:FF:000001">
    <property type="entry name" value="Ribosome maturation factor RimP"/>
    <property type="match status" value="1"/>
</dbReference>
<dbReference type="Gene3D" id="2.30.30.180">
    <property type="entry name" value="Ribosome maturation factor RimP, C-terminal domain"/>
    <property type="match status" value="1"/>
</dbReference>
<dbReference type="Gene3D" id="3.30.300.70">
    <property type="entry name" value="RimP-like superfamily, N-terminal"/>
    <property type="match status" value="1"/>
</dbReference>
<dbReference type="HAMAP" id="MF_01077">
    <property type="entry name" value="RimP"/>
    <property type="match status" value="1"/>
</dbReference>
<dbReference type="InterPro" id="IPR003728">
    <property type="entry name" value="Ribosome_maturation_RimP"/>
</dbReference>
<dbReference type="InterPro" id="IPR028998">
    <property type="entry name" value="RimP_C"/>
</dbReference>
<dbReference type="InterPro" id="IPR036847">
    <property type="entry name" value="RimP_C_sf"/>
</dbReference>
<dbReference type="InterPro" id="IPR028989">
    <property type="entry name" value="RimP_N"/>
</dbReference>
<dbReference type="InterPro" id="IPR035956">
    <property type="entry name" value="RimP_N_sf"/>
</dbReference>
<dbReference type="NCBIfam" id="NF000927">
    <property type="entry name" value="PRK00092.1-1"/>
    <property type="match status" value="1"/>
</dbReference>
<dbReference type="PANTHER" id="PTHR33867">
    <property type="entry name" value="RIBOSOME MATURATION FACTOR RIMP"/>
    <property type="match status" value="1"/>
</dbReference>
<dbReference type="PANTHER" id="PTHR33867:SF1">
    <property type="entry name" value="RIBOSOME MATURATION FACTOR RIMP"/>
    <property type="match status" value="1"/>
</dbReference>
<dbReference type="Pfam" id="PF17384">
    <property type="entry name" value="DUF150_C"/>
    <property type="match status" value="1"/>
</dbReference>
<dbReference type="Pfam" id="PF02576">
    <property type="entry name" value="RimP_N"/>
    <property type="match status" value="1"/>
</dbReference>
<dbReference type="SUPFAM" id="SSF74942">
    <property type="entry name" value="YhbC-like, C-terminal domain"/>
    <property type="match status" value="1"/>
</dbReference>
<dbReference type="SUPFAM" id="SSF75420">
    <property type="entry name" value="YhbC-like, N-terminal domain"/>
    <property type="match status" value="1"/>
</dbReference>
<reference key="1">
    <citation type="journal article" date="2009" name="Genome Biol.">
        <title>Genomic and genetic analyses of diversity and plant interactions of Pseudomonas fluorescens.</title>
        <authorList>
            <person name="Silby M.W."/>
            <person name="Cerdeno-Tarraga A.M."/>
            <person name="Vernikos G.S."/>
            <person name="Giddens S.R."/>
            <person name="Jackson R.W."/>
            <person name="Preston G.M."/>
            <person name="Zhang X.-X."/>
            <person name="Moon C.D."/>
            <person name="Gehrig S.M."/>
            <person name="Godfrey S.A.C."/>
            <person name="Knight C.G."/>
            <person name="Malone J.G."/>
            <person name="Robinson Z."/>
            <person name="Spiers A.J."/>
            <person name="Harris S."/>
            <person name="Challis G.L."/>
            <person name="Yaxley A.M."/>
            <person name="Harris D."/>
            <person name="Seeger K."/>
            <person name="Murphy L."/>
            <person name="Rutter S."/>
            <person name="Squares R."/>
            <person name="Quail M.A."/>
            <person name="Saunders E."/>
            <person name="Mavromatis K."/>
            <person name="Brettin T.S."/>
            <person name="Bentley S.D."/>
            <person name="Hothersall J."/>
            <person name="Stephens E."/>
            <person name="Thomas C.M."/>
            <person name="Parkhill J."/>
            <person name="Levy S.B."/>
            <person name="Rainey P.B."/>
            <person name="Thomson N.R."/>
        </authorList>
    </citation>
    <scope>NUCLEOTIDE SEQUENCE [LARGE SCALE GENOMIC DNA]</scope>
    <source>
        <strain>Pf0-1</strain>
    </source>
</reference>
<organism>
    <name type="scientific">Pseudomonas fluorescens (strain Pf0-1)</name>
    <dbReference type="NCBI Taxonomy" id="205922"/>
    <lineage>
        <taxon>Bacteria</taxon>
        <taxon>Pseudomonadati</taxon>
        <taxon>Pseudomonadota</taxon>
        <taxon>Gammaproteobacteria</taxon>
        <taxon>Pseudomonadales</taxon>
        <taxon>Pseudomonadaceae</taxon>
        <taxon>Pseudomonas</taxon>
    </lineage>
</organism>
<comment type="function">
    <text evidence="1">Required for maturation of 30S ribosomal subunits.</text>
</comment>
<comment type="subcellular location">
    <subcellularLocation>
        <location evidence="1">Cytoplasm</location>
    </subcellularLocation>
</comment>
<comment type="similarity">
    <text evidence="1">Belongs to the RimP family.</text>
</comment>
<comment type="sequence caution" evidence="2">
    <conflict type="erroneous initiation">
        <sequence resource="EMBL-CDS" id="ABA72520"/>
    </conflict>
</comment>
<feature type="chain" id="PRO_0000229266" description="Ribosome maturation factor RimP">
    <location>
        <begin position="1"/>
        <end position="158"/>
    </location>
</feature>
<name>RIMP_PSEPF</name>
<accession>Q3KI86</accession>